<name>FKBP2_HUMAN</name>
<protein>
    <recommendedName>
        <fullName>Peptidyl-prolyl cis-trans isomerase FKBP2</fullName>
        <shortName>PPIase FKBP2</shortName>
        <ecNumber>5.2.1.8</ecNumber>
    </recommendedName>
    <alternativeName>
        <fullName>13 kDa FK506-binding protein</fullName>
        <shortName>13 kDa FKBP</shortName>
        <shortName>FKBP-13</shortName>
    </alternativeName>
    <alternativeName>
        <fullName>FK506-binding protein 2</fullName>
        <shortName>FKBP-2</shortName>
    </alternativeName>
    <alternativeName>
        <fullName>Immunophilin FKBP13</fullName>
    </alternativeName>
    <alternativeName>
        <fullName>Rotamase</fullName>
    </alternativeName>
</protein>
<sequence>MRLSWFRVLTVLSICLSAVATATGAEGKRKLQIGVKKRVDHCPIKSRKGDVLHMHYTGKLEDGTEFDSSLPQNQPFVFSLGTGQVIKGWDQGLLGMCEGEKRKLVIPSELGYGERGAPPKIPGGATLVFEVELLKIERRTEL</sequence>
<evidence type="ECO:0000255" key="1"/>
<evidence type="ECO:0000255" key="2">
    <source>
        <dbReference type="PROSITE-ProRule" id="PRU00277"/>
    </source>
</evidence>
<evidence type="ECO:0000269" key="3">
    <source>
    </source>
</evidence>
<evidence type="ECO:0000269" key="4">
    <source>
    </source>
</evidence>
<evidence type="ECO:0000305" key="5"/>
<evidence type="ECO:0007829" key="6">
    <source>
        <dbReference type="PDB" id="2PBC"/>
    </source>
</evidence>
<reference key="1">
    <citation type="journal article" date="1991" name="Proc. Natl. Acad. Sci. U.S.A.">
        <title>Molecular cloning of a membrane-associated human FK506- and rapamycin-binding protein, FKBP-13.</title>
        <authorList>
            <person name="Jin Y.-J."/>
            <person name="Albers M.W."/>
            <person name="Lane W.S."/>
            <person name="Bierer B.E."/>
            <person name="Schreiber S.L."/>
            <person name="Burakoff S.J."/>
        </authorList>
    </citation>
    <scope>NUCLEOTIDE SEQUENCE [MRNA]</scope>
    <source>
        <tissue>Colon carcinoma</tissue>
    </source>
</reference>
<reference key="2">
    <citation type="journal article" date="1992" name="Biochem. Biophys. Res. Commun.">
        <title>Chromosomal band assignments of the genes encoding human FKBP12 and FKBP13.</title>
        <authorList>
            <person name="Dilella A.G."/>
            <person name="Hawkins A."/>
            <person name="Craig R.J."/>
            <person name="Schreiber S.L."/>
            <person name="Griffin C.A."/>
        </authorList>
    </citation>
    <scope>NUCLEOTIDE SEQUENCE [MRNA]</scope>
</reference>
<reference key="3">
    <citation type="journal article" date="2004" name="Genome Res.">
        <title>The status, quality, and expansion of the NIH full-length cDNA project: the Mammalian Gene Collection (MGC).</title>
        <authorList>
            <consortium name="The MGC Project Team"/>
        </authorList>
    </citation>
    <scope>NUCLEOTIDE SEQUENCE [LARGE SCALE MRNA]</scope>
    <scope>VARIANT GLN-7</scope>
    <source>
        <tissue>Placenta</tissue>
    </source>
</reference>
<reference key="4">
    <citation type="journal article" date="2003" name="Proc. Natl. Acad. Sci. U.S.A.">
        <title>Interaction of FK506-binding protein 13 with brefeldin A-inhibited guanine nucleotide-exchange protein 1 (BIG1): effects of FK506.</title>
        <authorList>
            <person name="Padilla P.I."/>
            <person name="Chang M.J."/>
            <person name="Pacheco-Rodriguez G."/>
            <person name="Adamik R."/>
            <person name="Moss J."/>
            <person name="Vaughan M."/>
        </authorList>
    </citation>
    <scope>INTERACTION WITH ARFGEF1</scope>
</reference>
<reference key="5">
    <citation type="journal article" date="2011" name="BMC Syst. Biol.">
        <title>Initial characterization of the human central proteome.</title>
        <authorList>
            <person name="Burkard T.R."/>
            <person name="Planyavsky M."/>
            <person name="Kaupe I."/>
            <person name="Breitwieser F.P."/>
            <person name="Buerckstuemmer T."/>
            <person name="Bennett K.L."/>
            <person name="Superti-Furga G."/>
            <person name="Colinge J."/>
        </authorList>
    </citation>
    <scope>IDENTIFICATION BY MASS SPECTROMETRY [LARGE SCALE ANALYSIS]</scope>
</reference>
<reference key="6">
    <citation type="journal article" date="2014" name="J. Proteomics">
        <title>An enzyme assisted RP-RPLC approach for in-depth analysis of human liver phosphoproteome.</title>
        <authorList>
            <person name="Bian Y."/>
            <person name="Song C."/>
            <person name="Cheng K."/>
            <person name="Dong M."/>
            <person name="Wang F."/>
            <person name="Huang J."/>
            <person name="Sun D."/>
            <person name="Wang L."/>
            <person name="Ye M."/>
            <person name="Zou H."/>
        </authorList>
    </citation>
    <scope>IDENTIFICATION BY MASS SPECTROMETRY [LARGE SCALE ANALYSIS]</scope>
    <source>
        <tissue>Liver</tissue>
    </source>
</reference>
<reference key="7">
    <citation type="journal article" date="2015" name="Proteomics">
        <title>N-terminome analysis of the human mitochondrial proteome.</title>
        <authorList>
            <person name="Vaca Jacome A.S."/>
            <person name="Rabilloud T."/>
            <person name="Schaeffer-Reiss C."/>
            <person name="Rompais M."/>
            <person name="Ayoub D."/>
            <person name="Lane L."/>
            <person name="Bairoch A."/>
            <person name="Van Dorsselaer A."/>
            <person name="Carapito C."/>
        </authorList>
    </citation>
    <scope>IDENTIFICATION BY MASS SPECTROMETRY [LARGE SCALE ANALYSIS]</scope>
</reference>
<keyword id="KW-0002">3D-structure</keyword>
<keyword id="KW-0256">Endoplasmic reticulum</keyword>
<keyword id="KW-0413">Isomerase</keyword>
<keyword id="KW-0472">Membrane</keyword>
<keyword id="KW-1267">Proteomics identification</keyword>
<keyword id="KW-1185">Reference proteome</keyword>
<keyword id="KW-0697">Rotamase</keyword>
<keyword id="KW-0732">Signal</keyword>
<gene>
    <name type="primary">FKBP2</name>
    <name type="synonym">FKBP13</name>
</gene>
<dbReference type="EC" id="5.2.1.8"/>
<dbReference type="EMBL" id="M65128">
    <property type="protein sequence ID" value="AAA58473.1"/>
    <property type="molecule type" value="mRNA"/>
</dbReference>
<dbReference type="EMBL" id="M75099">
    <property type="protein sequence ID" value="AAA36563.1"/>
    <property type="molecule type" value="mRNA"/>
</dbReference>
<dbReference type="EMBL" id="BC003384">
    <property type="protein sequence ID" value="AAH03384.1"/>
    <property type="molecule type" value="mRNA"/>
</dbReference>
<dbReference type="EMBL" id="BC091475">
    <property type="protein sequence ID" value="AAH91475.1"/>
    <property type="molecule type" value="mRNA"/>
</dbReference>
<dbReference type="CCDS" id="CCDS8063.1"/>
<dbReference type="PIR" id="JC1365">
    <property type="entry name" value="JC1365"/>
</dbReference>
<dbReference type="RefSeq" id="NP_001128680.1">
    <property type="nucleotide sequence ID" value="NM_001135208.2"/>
</dbReference>
<dbReference type="RefSeq" id="NP_001357289.1">
    <property type="nucleotide sequence ID" value="NM_001370360.1"/>
</dbReference>
<dbReference type="RefSeq" id="NP_001357291.1">
    <property type="nucleotide sequence ID" value="NM_001370362.1"/>
</dbReference>
<dbReference type="RefSeq" id="NP_001357292.1">
    <property type="nucleotide sequence ID" value="NM_001370363.1"/>
</dbReference>
<dbReference type="RefSeq" id="NP_004461.2">
    <property type="nucleotide sequence ID" value="NM_004470.3"/>
</dbReference>
<dbReference type="RefSeq" id="NP_476433.1">
    <property type="nucleotide sequence ID" value="NM_057092.2"/>
</dbReference>
<dbReference type="RefSeq" id="XP_005273905.1">
    <property type="nucleotide sequence ID" value="XM_005273848.3"/>
</dbReference>
<dbReference type="PDB" id="2PBC">
    <property type="method" value="X-ray"/>
    <property type="resolution" value="1.80 A"/>
    <property type="chains" value="A/B/C/D=43-142"/>
</dbReference>
<dbReference type="PDB" id="4NNR">
    <property type="method" value="X-ray"/>
    <property type="resolution" value="1.98 A"/>
    <property type="chains" value="A/B=1-142"/>
</dbReference>
<dbReference type="PDBsum" id="2PBC"/>
<dbReference type="PDBsum" id="4NNR"/>
<dbReference type="SMR" id="P26885"/>
<dbReference type="BioGRID" id="108576">
    <property type="interactions" value="77"/>
</dbReference>
<dbReference type="FunCoup" id="P26885">
    <property type="interactions" value="1105"/>
</dbReference>
<dbReference type="IntAct" id="P26885">
    <property type="interactions" value="23"/>
</dbReference>
<dbReference type="MINT" id="P26885"/>
<dbReference type="STRING" id="9606.ENSP00000378046"/>
<dbReference type="BindingDB" id="P26885"/>
<dbReference type="ChEMBL" id="CHEMBL4105949"/>
<dbReference type="GlyGen" id="P26885">
    <property type="glycosylation" value="1 site, 1 O-linked glycan (1 site)"/>
</dbReference>
<dbReference type="iPTMnet" id="P26885"/>
<dbReference type="MetOSite" id="P26885"/>
<dbReference type="PhosphoSitePlus" id="P26885"/>
<dbReference type="BioMuta" id="FKBP2"/>
<dbReference type="OGP" id="P26885"/>
<dbReference type="jPOST" id="P26885"/>
<dbReference type="MassIVE" id="P26885"/>
<dbReference type="PaxDb" id="9606-ENSP00000378046"/>
<dbReference type="PeptideAtlas" id="P26885"/>
<dbReference type="ProteomicsDB" id="54367"/>
<dbReference type="Pumba" id="P26885"/>
<dbReference type="TopDownProteomics" id="P26885"/>
<dbReference type="Antibodypedia" id="29197">
    <property type="antibodies" value="143 antibodies from 28 providers"/>
</dbReference>
<dbReference type="DNASU" id="2286"/>
<dbReference type="Ensembl" id="ENST00000309366.9">
    <property type="protein sequence ID" value="ENSP00000310935.4"/>
    <property type="gene ID" value="ENSG00000173486.14"/>
</dbReference>
<dbReference type="Ensembl" id="ENST00000449942.6">
    <property type="protein sequence ID" value="ENSP00000398147.2"/>
    <property type="gene ID" value="ENSG00000173486.14"/>
</dbReference>
<dbReference type="GeneID" id="2286"/>
<dbReference type="KEGG" id="hsa:2286"/>
<dbReference type="MANE-Select" id="ENST00000309366.9">
    <property type="protein sequence ID" value="ENSP00000310935.4"/>
    <property type="RefSeq nucleotide sequence ID" value="NM_004470.4"/>
    <property type="RefSeq protein sequence ID" value="NP_004461.2"/>
</dbReference>
<dbReference type="AGR" id="HGNC:3718"/>
<dbReference type="CTD" id="2286"/>
<dbReference type="DisGeNET" id="2286"/>
<dbReference type="GeneCards" id="FKBP2"/>
<dbReference type="HGNC" id="HGNC:3718">
    <property type="gene designation" value="FKBP2"/>
</dbReference>
<dbReference type="HPA" id="ENSG00000173486">
    <property type="expression patterns" value="Low tissue specificity"/>
</dbReference>
<dbReference type="MIM" id="186946">
    <property type="type" value="gene"/>
</dbReference>
<dbReference type="neXtProt" id="NX_P26885"/>
<dbReference type="OpenTargets" id="ENSG00000173486"/>
<dbReference type="PharmGKB" id="PA28159"/>
<dbReference type="VEuPathDB" id="HostDB:ENSG00000173486"/>
<dbReference type="eggNOG" id="KOG0549">
    <property type="taxonomic scope" value="Eukaryota"/>
</dbReference>
<dbReference type="GeneTree" id="ENSGT00940000157074"/>
<dbReference type="HOGENOM" id="CLU_013615_8_2_1"/>
<dbReference type="InParanoid" id="P26885"/>
<dbReference type="OrthoDB" id="9807884at2759"/>
<dbReference type="PAN-GO" id="P26885">
    <property type="GO annotations" value="2 GO annotations based on evolutionary models"/>
</dbReference>
<dbReference type="PhylomeDB" id="P26885"/>
<dbReference type="TreeFam" id="TF105292"/>
<dbReference type="PathwayCommons" id="P26885"/>
<dbReference type="SignaLink" id="P26885"/>
<dbReference type="BioGRID-ORCS" id="2286">
    <property type="hits" value="17 hits in 1155 CRISPR screens"/>
</dbReference>
<dbReference type="ChiTaRS" id="FKBP2">
    <property type="organism name" value="human"/>
</dbReference>
<dbReference type="EvolutionaryTrace" id="P26885"/>
<dbReference type="GeneWiki" id="FKBP2"/>
<dbReference type="GenomeRNAi" id="2286"/>
<dbReference type="Pharos" id="P26885">
    <property type="development level" value="Tchem"/>
</dbReference>
<dbReference type="PRO" id="PR:P26885"/>
<dbReference type="Proteomes" id="UP000005640">
    <property type="component" value="Chromosome 11"/>
</dbReference>
<dbReference type="RNAct" id="P26885">
    <property type="molecule type" value="protein"/>
</dbReference>
<dbReference type="Bgee" id="ENSG00000173486">
    <property type="expression patterns" value="Expressed in pituitary gland and 98 other cell types or tissues"/>
</dbReference>
<dbReference type="ExpressionAtlas" id="P26885">
    <property type="expression patterns" value="baseline and differential"/>
</dbReference>
<dbReference type="GO" id="GO:0005783">
    <property type="term" value="C:endoplasmic reticulum"/>
    <property type="evidence" value="ECO:0000318"/>
    <property type="project" value="GO_Central"/>
</dbReference>
<dbReference type="GO" id="GO:0005789">
    <property type="term" value="C:endoplasmic reticulum membrane"/>
    <property type="evidence" value="ECO:0007669"/>
    <property type="project" value="UniProtKB-SubCell"/>
</dbReference>
<dbReference type="GO" id="GO:0005528">
    <property type="term" value="F:FK506 binding"/>
    <property type="evidence" value="ECO:0000304"/>
    <property type="project" value="ProtInc"/>
</dbReference>
<dbReference type="GO" id="GO:0003755">
    <property type="term" value="F:peptidyl-prolyl cis-trans isomerase activity"/>
    <property type="evidence" value="ECO:0000318"/>
    <property type="project" value="GO_Central"/>
</dbReference>
<dbReference type="GO" id="GO:0061077">
    <property type="term" value="P:chaperone-mediated protein folding"/>
    <property type="evidence" value="ECO:0007669"/>
    <property type="project" value="InterPro"/>
</dbReference>
<dbReference type="FunFam" id="3.10.50.40:FF:000016">
    <property type="entry name" value="Peptidylprolyl isomerase"/>
    <property type="match status" value="1"/>
</dbReference>
<dbReference type="Gene3D" id="3.10.50.40">
    <property type="match status" value="1"/>
</dbReference>
<dbReference type="InterPro" id="IPR044609">
    <property type="entry name" value="FKBP2/11"/>
</dbReference>
<dbReference type="InterPro" id="IPR046357">
    <property type="entry name" value="PPIase_dom_sf"/>
</dbReference>
<dbReference type="InterPro" id="IPR001179">
    <property type="entry name" value="PPIase_FKBP_dom"/>
</dbReference>
<dbReference type="PANTHER" id="PTHR45779:SF3">
    <property type="entry name" value="PEPTIDYL-PROLYL CIS-TRANS ISOMERASE FKBP2"/>
    <property type="match status" value="1"/>
</dbReference>
<dbReference type="PANTHER" id="PTHR45779">
    <property type="entry name" value="PEPTIDYLPROLYL ISOMERASE"/>
    <property type="match status" value="1"/>
</dbReference>
<dbReference type="Pfam" id="PF00254">
    <property type="entry name" value="FKBP_C"/>
    <property type="match status" value="1"/>
</dbReference>
<dbReference type="SUPFAM" id="SSF54534">
    <property type="entry name" value="FKBP-like"/>
    <property type="match status" value="1"/>
</dbReference>
<dbReference type="PROSITE" id="PS50059">
    <property type="entry name" value="FKBP_PPIASE"/>
    <property type="match status" value="1"/>
</dbReference>
<proteinExistence type="evidence at protein level"/>
<organism>
    <name type="scientific">Homo sapiens</name>
    <name type="common">Human</name>
    <dbReference type="NCBI Taxonomy" id="9606"/>
    <lineage>
        <taxon>Eukaryota</taxon>
        <taxon>Metazoa</taxon>
        <taxon>Chordata</taxon>
        <taxon>Craniata</taxon>
        <taxon>Vertebrata</taxon>
        <taxon>Euteleostomi</taxon>
        <taxon>Mammalia</taxon>
        <taxon>Eutheria</taxon>
        <taxon>Euarchontoglires</taxon>
        <taxon>Primates</taxon>
        <taxon>Haplorrhini</taxon>
        <taxon>Catarrhini</taxon>
        <taxon>Hominidae</taxon>
        <taxon>Homo</taxon>
    </lineage>
</organism>
<comment type="function">
    <text>PPIases accelerate the folding of proteins. It catalyzes the cis-trans isomerization of proline imidic peptide bonds in oligopeptides.</text>
</comment>
<comment type="catalytic activity">
    <reaction>
        <text>[protein]-peptidylproline (omega=180) = [protein]-peptidylproline (omega=0)</text>
        <dbReference type="Rhea" id="RHEA:16237"/>
        <dbReference type="Rhea" id="RHEA-COMP:10747"/>
        <dbReference type="Rhea" id="RHEA-COMP:10748"/>
        <dbReference type="ChEBI" id="CHEBI:83833"/>
        <dbReference type="ChEBI" id="CHEBI:83834"/>
        <dbReference type="EC" id="5.2.1.8"/>
    </reaction>
</comment>
<comment type="activity regulation">
    <text>Inhibited by both FK506 and rapamycin.</text>
</comment>
<comment type="subunit">
    <text evidence="3">Interacts with ARFGEF1/BIG1 and the C-terminal of EPB41L2.</text>
</comment>
<comment type="interaction">
    <interactant intactId="EBI-719873">
        <id>P26885</id>
    </interactant>
    <interactant intactId="EBI-930964">
        <id>P54253</id>
        <label>ATXN1</label>
    </interactant>
    <organismsDiffer>false</organismsDiffer>
    <experiments>3</experiments>
</comment>
<comment type="interaction">
    <interactant intactId="EBI-719873">
        <id>P26885</id>
    </interactant>
    <interactant intactId="EBI-466029">
        <id>P42858</id>
        <label>HTT</label>
    </interactant>
    <organismsDiffer>false</organismsDiffer>
    <experiments>6</experiments>
</comment>
<comment type="interaction">
    <interactant intactId="EBI-719873">
        <id>P26885</id>
    </interactant>
    <interactant intactId="EBI-741480">
        <id>Q9UMX0</id>
        <label>UBQLN1</label>
    </interactant>
    <organismsDiffer>false</organismsDiffer>
    <experiments>3</experiments>
</comment>
<comment type="interaction">
    <interactant intactId="EBI-719873">
        <id>P26885</id>
    </interactant>
    <interactant intactId="EBI-10173939">
        <id>Q9UMX0-2</id>
        <label>UBQLN1</label>
    </interactant>
    <organismsDiffer>false</organismsDiffer>
    <experiments>3</experiments>
</comment>
<comment type="interaction">
    <interactant intactId="EBI-719873">
        <id>P26885</id>
    </interactant>
    <interactant intactId="EBI-947187">
        <id>Q9UHD9</id>
        <label>UBQLN2</label>
    </interactant>
    <organismsDiffer>false</organismsDiffer>
    <experiments>3</experiments>
</comment>
<comment type="interaction">
    <interactant intactId="EBI-719873">
        <id>P26885</id>
    </interactant>
    <interactant intactId="EBI-711226">
        <id>Q9NRR5</id>
        <label>UBQLN4</label>
    </interactant>
    <organismsDiffer>false</organismsDiffer>
    <experiments>2</experiments>
</comment>
<comment type="subcellular location">
    <subcellularLocation>
        <location evidence="5">Endoplasmic reticulum membrane</location>
        <topology evidence="5">Peripheral membrane protein</topology>
    </subcellularLocation>
</comment>
<comment type="tissue specificity">
    <text>T-cells and thymus.</text>
</comment>
<comment type="similarity">
    <text evidence="5">Belongs to the FKBP-type PPIase family. FKBP2 subfamily.</text>
</comment>
<feature type="signal peptide">
    <location>
        <begin position="1"/>
        <end position="21"/>
    </location>
</feature>
<feature type="chain" id="PRO_0000025506" description="Peptidyl-prolyl cis-trans isomerase FKBP2">
    <location>
        <begin position="22"/>
        <end position="142"/>
    </location>
</feature>
<feature type="domain" description="PPIase FKBP-type" evidence="2">
    <location>
        <begin position="49"/>
        <end position="137"/>
    </location>
</feature>
<feature type="short sequence motif" description="Prevents secretion from ER" evidence="1">
    <location>
        <begin position="139"/>
        <end position="142"/>
    </location>
</feature>
<feature type="sequence variant" id="VAR_050623" description="In dbSNP:rs4672." evidence="4">
    <original>R</original>
    <variation>Q</variation>
    <location>
        <position position="7"/>
    </location>
</feature>
<feature type="sequence variant" id="VAR_006410">
    <original>TA</original>
    <variation>S</variation>
    <location>
        <begin position="21"/>
        <end position="22"/>
    </location>
</feature>
<feature type="sequence variant" id="VAR_006411">
    <original>A</original>
    <variation>T</variation>
    <location>
        <position position="25"/>
    </location>
</feature>
<feature type="sequence variant" id="VAR_006412">
    <original>C</original>
    <variation>Y</variation>
    <location>
        <position position="97"/>
    </location>
</feature>
<feature type="strand" evidence="6">
    <location>
        <begin position="51"/>
        <end position="59"/>
    </location>
</feature>
<feature type="strand" evidence="6">
    <location>
        <begin position="65"/>
        <end position="69"/>
    </location>
</feature>
<feature type="turn" evidence="6">
    <location>
        <begin position="70"/>
        <end position="73"/>
    </location>
</feature>
<feature type="strand" evidence="6">
    <location>
        <begin position="76"/>
        <end position="79"/>
    </location>
</feature>
<feature type="strand" evidence="6">
    <location>
        <begin position="82"/>
        <end position="85"/>
    </location>
</feature>
<feature type="helix" evidence="6">
    <location>
        <begin position="87"/>
        <end position="90"/>
    </location>
</feature>
<feature type="strand" evidence="6">
    <location>
        <begin position="101"/>
        <end position="106"/>
    </location>
</feature>
<feature type="helix" evidence="6">
    <location>
        <begin position="108"/>
        <end position="110"/>
    </location>
</feature>
<feature type="turn" evidence="6">
    <location>
        <begin position="111"/>
        <end position="115"/>
    </location>
</feature>
<feature type="turn" evidence="6">
    <location>
        <begin position="118"/>
        <end position="120"/>
    </location>
</feature>
<feature type="strand" evidence="6">
    <location>
        <begin position="127"/>
        <end position="136"/>
    </location>
</feature>
<feature type="helix" evidence="6">
    <location>
        <begin position="137"/>
        <end position="139"/>
    </location>
</feature>
<accession>P26885</accession>
<accession>Q5BJH9</accession>
<accession>Q9BTS7</accession>